<reference key="1">
    <citation type="journal article" date="1999" name="J. Neurosci.">
        <title>The Aplysia mytilus inhibitory peptide-related peptides: identification, cloning, processing, distribution, and action.</title>
        <authorList>
            <person name="Fujisawa Y."/>
            <person name="Furukawa Y."/>
            <person name="Ohta S."/>
            <person name="Ellis T.A."/>
            <person name="Dembrow N.C."/>
            <person name="Li L."/>
            <person name="Floyd P.D."/>
            <person name="Sweedler J.V."/>
            <person name="Minakata H."/>
            <person name="Nakamaru K."/>
            <person name="Morishita F."/>
            <person name="Matsushima O."/>
            <person name="Weiss K.R."/>
            <person name="Vilim F.S."/>
        </authorList>
    </citation>
    <scope>NUCLEOTIDE SEQUENCE [MRNA]</scope>
    <scope>PROTEOLYTIC PROCESSING</scope>
    <scope>SUBCELLULAR LOCATION</scope>
    <scope>PYROGLUTAMATE FORMATION AT GLN-462; GLN-494 AND GLN-664</scope>
    <scope>AMIDATION AT PHE-142; PHE-153; PHE-164; PHE-190; PHE-209; PHE-229; PHE-255; PHE-274; PHE-294; PHE-317; PHE-338; PHE-359; PHE-383; PHE-407; PHE-433; PHE-467; PHE-499; ILE-515; MET-552; VAL-592; LEU-601; ILE-610; VAL-619; ILE-628; ILE-669 AND VAL-714</scope>
    <scope>MASS SPECTROMETRY</scope>
    <source>
        <tissue>CNS</tissue>
    </source>
</reference>
<accession>Q9NDE8</accession>
<evidence type="ECO:0000255" key="1"/>
<evidence type="ECO:0000256" key="2">
    <source>
        <dbReference type="SAM" id="MobiDB-lite"/>
    </source>
</evidence>
<evidence type="ECO:0000269" key="3">
    <source>
    </source>
</evidence>
<protein>
    <recommendedName>
        <fullName>MIP-related peptides</fullName>
    </recommendedName>
    <alternativeName>
        <fullName>AMRPs</fullName>
    </alternativeName>
    <component>
        <recommendedName>
            <fullName>GAAPKFF-amide</fullName>
        </recommendedName>
    </component>
    <component>
        <recommendedName>
            <fullName>GQAPRFF-amide</fullName>
        </recommendedName>
    </component>
    <component>
        <recommendedName>
            <fullName>AMAPKFF-amide</fullName>
        </recommendedName>
    </component>
    <component>
        <recommendedName>
            <fullName>GSPRFF-amide</fullName>
        </recommendedName>
    </component>
    <component>
        <recommendedName>
            <fullName>AAPRFF-amide</fullName>
        </recommendedName>
    </component>
    <component>
        <recommendedName>
            <fullName>QAPRFF-amide</fullName>
        </recommendedName>
    </component>
    <component>
        <recommendedName>
            <fullName>GSPHFI-amide</fullName>
        </recommendedName>
    </component>
    <component>
        <recommendedName>
            <fullName>SDPFFM-amide</fullName>
        </recommendedName>
    </component>
    <component>
        <recommendedName>
            <fullName>GAPRFL-amide</fullName>
        </recommendedName>
    </component>
    <component>
        <recommendedName>
            <fullName>GAPRFI-amide</fullName>
        </recommendedName>
    </component>
    <component>
        <recommendedName>
            <fullName>GAPRFV-amide</fullName>
        </recommendedName>
    </component>
    <component>
        <recommendedName>
            <fullName>GPPRFI-amide</fullName>
        </recommendedName>
    </component>
    <component>
        <recommendedName>
            <fullName>QAPRFI-amide</fullName>
        </recommendedName>
    </component>
    <component>
        <recommendedName>
            <fullName>LWVPGMV-amide</fullName>
        </recommendedName>
    </component>
</protein>
<dbReference type="EMBL" id="AF160191">
    <property type="protein sequence ID" value="AAF80382.1"/>
    <property type="molecule type" value="mRNA"/>
</dbReference>
<dbReference type="RefSeq" id="NP_001191614.1">
    <property type="nucleotide sequence ID" value="NM_001204685.1"/>
</dbReference>
<dbReference type="EnsemblMetazoa" id="NM_001204685.1">
    <property type="protein sequence ID" value="NP_001191614.1"/>
    <property type="gene ID" value="GeneID_100533402"/>
</dbReference>
<dbReference type="GeneID" id="100533402"/>
<dbReference type="CTD" id="34686"/>
<dbReference type="OrthoDB" id="6157850at2759"/>
<dbReference type="Proteomes" id="UP000694888">
    <property type="component" value="Unplaced"/>
</dbReference>
<dbReference type="GO" id="GO:0005576">
    <property type="term" value="C:extracellular region"/>
    <property type="evidence" value="ECO:0007669"/>
    <property type="project" value="UniProtKB-SubCell"/>
</dbReference>
<dbReference type="GO" id="GO:0007218">
    <property type="term" value="P:neuropeptide signaling pathway"/>
    <property type="evidence" value="ECO:0007669"/>
    <property type="project" value="UniProtKB-KW"/>
</dbReference>
<comment type="function">
    <text>Has some structural and functional features similar to vertebrate opioid peptides. AMRPs are inhibitory on Aplysia esophagus, penis retractor muscle, and body wall muscle.</text>
</comment>
<comment type="subcellular location">
    <subcellularLocation>
        <location evidence="3">Secreted</location>
    </subcellularLocation>
</comment>
<comment type="tissue specificity">
    <text>Expressed in the CNS and peripheral tissues (the digestive tract, vasculature, and the reproductive organs).</text>
</comment>
<comment type="mass spectrometry">
    <molecule>GAAPKFF-amide</molecule>
</comment>
<comment type="mass spectrometry">
    <molecule>GQAPRFF-amide</molecule>
</comment>
<comment type="mass spectrometry">
    <molecule>AMAPKFF-amide</molecule>
</comment>
<comment type="mass spectrometry">
    <molecule>GSPRFF-amide</molecule>
</comment>
<comment type="mass spectrometry">
    <molecule>AAPRFF-amide</molecule>
</comment>
<comment type="mass spectrometry">
    <molecule>QAPRFF-amide</molecule>
</comment>
<comment type="mass spectrometry">
    <molecule>GSPHFI-amide</molecule>
</comment>
<comment type="mass spectrometry">
    <molecule>SDPFFM-amide</molecule>
</comment>
<comment type="mass spectrometry">
    <molecule>GAPRFV-amide</molecule>
</comment>
<comment type="mass spectrometry">
    <molecule>GAPRFL-amide</molecule>
</comment>
<comment type="mass spectrometry">
    <molecule>GPPRFI-amide</molecule>
</comment>
<comment type="mass spectrometry">
    <molecule>QAPRFI-amide</molecule>
</comment>
<comment type="mass spectrometry">
    <molecule>LWVPGMV-amide</molecule>
</comment>
<keyword id="KW-0027">Amidation</keyword>
<keyword id="KW-0165">Cleavage on pair of basic residues</keyword>
<keyword id="KW-0527">Neuropeptide</keyword>
<keyword id="KW-0873">Pyrrolidone carboxylic acid</keyword>
<keyword id="KW-0964">Secreted</keyword>
<keyword id="KW-0732">Signal</keyword>
<sequence>MCTRPGLAALLVLMTSCASSFSRADTQSASAAALSAASADAQAARQQQEQHLVAQQQQQQQQQQQHSNNNEPQQRAPSLDPYYRSLLDGSQGGQLFAPAQPVSQPDLSPDFSNPMGSSLSQSGTPEDSDTKVDTRGAAPKFFGKKRGQAPRFFGKKRAMAPKFFGKKSSEFPTSNSEQLALDTRGSPRFFGKKSFPESNREQRGSPRFFGKKRFDENVDIDERAAPRFFGKKSSGESAGDSGYISVASRGSPRFFGKKQDDDIMIAARGSPRFFGKKRSDDNVALDLRGSPRFFGKRQSSDLDDEISVALRGSPRFFGKKRADDEDILLGERGSPRFFGKKRANDENISFSLRGSPRFFGKKRSDESDDDNIGLVARGSPRFFGKKRSDETDDENIGLMARGSPRFFGRKRSDGLDDGGNIIDVATRGSPRFFGKKRSNSDSSDKSSDSALSSSESGRQTRQAPRFFGKRYVDEHHVSKRAAATAFPLIIEARQAPRFFGKREYRYPPRGSPHFIGKRFSLYRSPGKYSLSSPYMSAKEFKETFRRSDPFFMGKRTAELNEEGSDDFTNDDTDDENEYDETVLFKRGAPRFVGKRGAPRFLGRRGAPRFIGRRGAPRFVGKRGPPRFIGKRDLDWYQKALCAEADILELDDCADFLGNDDVKRQAPRFIGRKRGEDVSERDYAQLLEALSRLQAIKQIKARIQNEKRLWVPGMVGRRSEYNLGPFDEFVDESMER</sequence>
<organism>
    <name type="scientific">Aplysia californica</name>
    <name type="common">California sea hare</name>
    <dbReference type="NCBI Taxonomy" id="6500"/>
    <lineage>
        <taxon>Eukaryota</taxon>
        <taxon>Metazoa</taxon>
        <taxon>Spiralia</taxon>
        <taxon>Lophotrochozoa</taxon>
        <taxon>Mollusca</taxon>
        <taxon>Gastropoda</taxon>
        <taxon>Heterobranchia</taxon>
        <taxon>Euthyneura</taxon>
        <taxon>Tectipleura</taxon>
        <taxon>Aplysiida</taxon>
        <taxon>Aplysioidea</taxon>
        <taxon>Aplysiidae</taxon>
        <taxon>Aplysia</taxon>
    </lineage>
</organism>
<gene>
    <name type="primary">MRP</name>
</gene>
<feature type="signal peptide" evidence="1">
    <location>
        <begin position="1"/>
        <end position="20"/>
    </location>
</feature>
<feature type="propeptide" id="PRO_0000343305" evidence="1">
    <location>
        <begin position="21"/>
        <end position="135"/>
    </location>
</feature>
<feature type="peptide" id="PRO_0000343306" description="GAAPKFF-amide">
    <location>
        <begin position="136"/>
        <end position="142"/>
    </location>
</feature>
<feature type="peptide" id="PRO_0000343307" description="GQAPRFF-amide">
    <location>
        <begin position="147"/>
        <end position="153"/>
    </location>
</feature>
<feature type="peptide" id="PRO_0000343308" description="AMAPKFF-amide">
    <location>
        <begin position="158"/>
        <end position="164"/>
    </location>
</feature>
<feature type="propeptide" id="PRO_0000343309">
    <location>
        <begin position="168"/>
        <end position="184"/>
    </location>
</feature>
<feature type="peptide" id="PRO_0000343310" description="GSPRFF-amide">
    <location>
        <begin position="185"/>
        <end position="190"/>
    </location>
</feature>
<feature type="propeptide" id="PRO_0000343311">
    <location>
        <begin position="194"/>
        <end position="203"/>
    </location>
</feature>
<feature type="peptide" id="PRO_0000343312" description="GSPRFF-amide">
    <location>
        <begin position="204"/>
        <end position="209"/>
    </location>
</feature>
<feature type="propeptide" id="PRO_0000343313" description="Linker peptide">
    <location>
        <begin position="214"/>
        <end position="229"/>
    </location>
</feature>
<feature type="peptide" id="PRO_0000343314" description="AAPRFF-amide">
    <location>
        <begin position="224"/>
        <end position="229"/>
    </location>
</feature>
<feature type="propeptide" id="PRO_0000343315">
    <location>
        <begin position="233"/>
        <end position="249"/>
    </location>
</feature>
<feature type="peptide" id="PRO_0000343316" description="GSPRFF-amide">
    <location>
        <begin position="250"/>
        <end position="255"/>
    </location>
</feature>
<feature type="propeptide" id="PRO_0000343317" description="Linker peptide">
    <location>
        <begin position="259"/>
        <end position="267"/>
    </location>
</feature>
<feature type="peptide" id="PRO_0000343318" description="GSPRFF-amide">
    <location>
        <begin position="269"/>
        <end position="274"/>
    </location>
</feature>
<feature type="propeptide" id="PRO_0000343319" description="Linker peptide">
    <location>
        <begin position="279"/>
        <end position="287"/>
    </location>
</feature>
<feature type="peptide" id="PRO_0000343320" description="GSPRFF-amide">
    <location>
        <begin position="289"/>
        <end position="294"/>
    </location>
</feature>
<feature type="propeptide" id="PRO_0000343321">
    <location>
        <begin position="298"/>
        <end position="311"/>
    </location>
</feature>
<feature type="peptide" id="PRO_0000343322" description="GSPRFF-amide">
    <location>
        <begin position="312"/>
        <end position="317"/>
    </location>
</feature>
<feature type="propeptide" id="PRO_0000343323">
    <location>
        <begin position="321"/>
        <end position="332"/>
    </location>
</feature>
<feature type="peptide" id="PRO_0000343324" description="GSPRFF-amide">
    <location>
        <begin position="333"/>
        <end position="338"/>
    </location>
</feature>
<feature type="propeptide" id="PRO_0000343325">
    <location>
        <begin position="342"/>
        <end position="353"/>
    </location>
</feature>
<feature type="peptide" id="PRO_0000343326" description="GSPRFF-amide">
    <location>
        <begin position="354"/>
        <end position="359"/>
    </location>
</feature>
<feature type="propeptide" id="PRO_0000343327">
    <location>
        <begin position="363"/>
        <end position="377"/>
    </location>
</feature>
<feature type="peptide" id="PRO_0000343328" description="GSPRFF-amide">
    <location>
        <begin position="378"/>
        <end position="383"/>
    </location>
</feature>
<feature type="propeptide" id="PRO_0000343329">
    <location>
        <begin position="387"/>
        <end position="401"/>
    </location>
</feature>
<feature type="peptide" id="PRO_0000343330" description="GSPRFF-amide">
    <location>
        <begin position="402"/>
        <end position="407"/>
    </location>
</feature>
<feature type="propeptide" id="PRO_0000343331" description="Linker peptide">
    <location>
        <begin position="412"/>
        <end position="426"/>
    </location>
</feature>
<feature type="peptide" id="PRO_0000343332" description="GSPRFF-amide">
    <location>
        <begin position="428"/>
        <end position="433"/>
    </location>
</feature>
<feature type="propeptide" id="PRO_0000343333">
    <location>
        <begin position="437"/>
        <end position="461"/>
    </location>
</feature>
<feature type="peptide" id="PRO_0000343334" description="QAPRFF-amide">
    <location>
        <begin position="462"/>
        <end position="467"/>
    </location>
</feature>
<feature type="propeptide" id="PRO_0000343335">
    <location>
        <begin position="471"/>
        <end position="493"/>
    </location>
</feature>
<feature type="peptide" id="PRO_0000343336" description="QAPRFF-amide">
    <location>
        <begin position="494"/>
        <end position="499"/>
    </location>
</feature>
<feature type="propeptide" id="PRO_0000343337">
    <location>
        <begin position="503"/>
        <end position="509"/>
    </location>
</feature>
<feature type="peptide" id="PRO_0000343338" description="GSPHFI-amide">
    <location>
        <begin position="510"/>
        <end position="515"/>
    </location>
</feature>
<feature type="propeptide" id="PRO_0000343339">
    <location>
        <begin position="519"/>
        <end position="546"/>
    </location>
</feature>
<feature type="peptide" id="PRO_0000343340" description="SDPFFM-amide">
    <location>
        <begin position="547"/>
        <end position="552"/>
    </location>
</feature>
<feature type="propeptide" id="PRO_0000343341">
    <location>
        <begin position="556"/>
        <end position="585"/>
    </location>
</feature>
<feature type="peptide" id="PRO_0000343342" description="GAPRFV-amide">
    <location>
        <begin position="587"/>
        <end position="592"/>
    </location>
</feature>
<feature type="peptide" id="PRO_0000343343" description="GAPRFL-amide">
    <location>
        <begin position="596"/>
        <end position="601"/>
    </location>
</feature>
<feature type="peptide" id="PRO_0000343344" description="GAPRFI-amide">
    <location>
        <begin position="605"/>
        <end position="610"/>
    </location>
</feature>
<feature type="peptide" id="PRO_0000343345" description="GAPRFV-amide">
    <location>
        <begin position="614"/>
        <end position="619"/>
    </location>
</feature>
<feature type="peptide" id="PRO_0000343346" description="GPPRFI-amide">
    <location>
        <begin position="623"/>
        <end position="628"/>
    </location>
</feature>
<feature type="propeptide" id="PRO_0000343347" description="Linker peptide">
    <location>
        <begin position="632"/>
        <end position="661"/>
    </location>
</feature>
<feature type="peptide" id="PRO_0000343348" description="QAPRFI-amide">
    <location>
        <begin position="664"/>
        <end position="669"/>
    </location>
</feature>
<feature type="propeptide" id="PRO_0000343349" description="Linker peptide">
    <location>
        <begin position="674"/>
        <end position="705"/>
    </location>
</feature>
<feature type="peptide" id="PRO_0000343350" description="LWVPGMV-amide">
    <location>
        <begin position="708"/>
        <end position="714"/>
    </location>
</feature>
<feature type="propeptide" id="PRO_0000343351">
    <location>
        <begin position="715"/>
        <end position="735"/>
    </location>
</feature>
<feature type="region of interest" description="Disordered" evidence="2">
    <location>
        <begin position="33"/>
        <end position="212"/>
    </location>
</feature>
<feature type="region of interest" description="Disordered" evidence="2">
    <location>
        <begin position="229"/>
        <end position="251"/>
    </location>
</feature>
<feature type="region of interest" description="Disordered" evidence="2">
    <location>
        <begin position="352"/>
        <end position="373"/>
    </location>
</feature>
<feature type="region of interest" description="Disordered" evidence="2">
    <location>
        <begin position="381"/>
        <end position="400"/>
    </location>
</feature>
<feature type="region of interest" description="Disordered" evidence="2">
    <location>
        <begin position="430"/>
        <end position="464"/>
    </location>
</feature>
<feature type="compositionally biased region" description="Low complexity" evidence="2">
    <location>
        <begin position="33"/>
        <end position="65"/>
    </location>
</feature>
<feature type="compositionally biased region" description="Polar residues" evidence="2">
    <location>
        <begin position="66"/>
        <end position="76"/>
    </location>
</feature>
<feature type="compositionally biased region" description="Polar residues" evidence="2">
    <location>
        <begin position="101"/>
        <end position="125"/>
    </location>
</feature>
<feature type="compositionally biased region" description="Basic residues" evidence="2">
    <location>
        <begin position="142"/>
        <end position="159"/>
    </location>
</feature>
<feature type="compositionally biased region" description="Basic and acidic residues" evidence="2">
    <location>
        <begin position="194"/>
        <end position="204"/>
    </location>
</feature>
<feature type="compositionally biased region" description="Basic and acidic residues" evidence="2">
    <location>
        <begin position="438"/>
        <end position="447"/>
    </location>
</feature>
<feature type="modified residue" description="Phenylalanine amide" evidence="3">
    <location>
        <position position="142"/>
    </location>
</feature>
<feature type="modified residue" description="Phenylalanine amide" evidence="3">
    <location>
        <position position="153"/>
    </location>
</feature>
<feature type="modified residue" description="Phenylalanine amide" evidence="3">
    <location>
        <position position="164"/>
    </location>
</feature>
<feature type="modified residue" description="Phenylalanine amide" evidence="3">
    <location>
        <position position="190"/>
    </location>
</feature>
<feature type="modified residue" description="Phenylalanine amide" evidence="3">
    <location>
        <position position="209"/>
    </location>
</feature>
<feature type="modified residue" description="Phenylalanine amide" evidence="3">
    <location>
        <position position="229"/>
    </location>
</feature>
<feature type="modified residue" description="Phenylalanine amide" evidence="3">
    <location>
        <position position="255"/>
    </location>
</feature>
<feature type="modified residue" description="Phenylalanine amide" evidence="3">
    <location>
        <position position="274"/>
    </location>
</feature>
<feature type="modified residue" description="Phenylalanine amide" evidence="3">
    <location>
        <position position="294"/>
    </location>
</feature>
<feature type="modified residue" description="Phenylalanine amide" evidence="3">
    <location>
        <position position="317"/>
    </location>
</feature>
<feature type="modified residue" description="Phenylalanine amide" evidence="3">
    <location>
        <position position="338"/>
    </location>
</feature>
<feature type="modified residue" description="Phenylalanine amide" evidence="3">
    <location>
        <position position="359"/>
    </location>
</feature>
<feature type="modified residue" description="Phenylalanine amide" evidence="3">
    <location>
        <position position="383"/>
    </location>
</feature>
<feature type="modified residue" description="Phenylalanine amide" evidence="3">
    <location>
        <position position="407"/>
    </location>
</feature>
<feature type="modified residue" description="Phenylalanine amide" evidence="3">
    <location>
        <position position="433"/>
    </location>
</feature>
<feature type="modified residue" description="Pyrrolidone carboxylic acid" evidence="3">
    <location>
        <position position="462"/>
    </location>
</feature>
<feature type="modified residue" description="Phenylalanine amide" evidence="3">
    <location>
        <position position="467"/>
    </location>
</feature>
<feature type="modified residue" description="Pyrrolidone carboxylic acid" evidence="3">
    <location>
        <position position="494"/>
    </location>
</feature>
<feature type="modified residue" description="Phenylalanine amide" evidence="3">
    <location>
        <position position="499"/>
    </location>
</feature>
<feature type="modified residue" description="Isoleucine amide" evidence="3">
    <location>
        <position position="515"/>
    </location>
</feature>
<feature type="modified residue" description="Methionine amide" evidence="3">
    <location>
        <position position="552"/>
    </location>
</feature>
<feature type="modified residue" description="Valine amide" evidence="3">
    <location>
        <position position="592"/>
    </location>
</feature>
<feature type="modified residue" description="Leucine amide" evidence="3">
    <location>
        <position position="601"/>
    </location>
</feature>
<feature type="modified residue" description="Isoleucine amide" evidence="3">
    <location>
        <position position="610"/>
    </location>
</feature>
<feature type="modified residue" description="Valine amide" evidence="3">
    <location>
        <position position="619"/>
    </location>
</feature>
<feature type="modified residue" description="Isoleucine amide" evidence="3">
    <location>
        <position position="628"/>
    </location>
</feature>
<feature type="modified residue" description="Pyrrolidone carboxylic acid" evidence="3">
    <location>
        <position position="664"/>
    </location>
</feature>
<feature type="modified residue" description="Isoleucine amide" evidence="3">
    <location>
        <position position="669"/>
    </location>
</feature>
<feature type="modified residue" description="Valine amide" evidence="3">
    <location>
        <position position="714"/>
    </location>
</feature>
<name>MIPR_APLCA</name>
<proteinExistence type="evidence at protein level"/>